<sequence>MAVRELPGAWNFRDVADTATALRPGRLFRSSELSRLDDAGRATLRRLGITDVADLRSSREVARRGPGRVPDGIDVHLLPFPDLADDDADDSAPHETAFKRLLTNDGSNGESGESSQSINDAATRYMTDEYRQFPTRNGAQRALHRVVTLLAAGRPVLTHCFAGKDRTGFVVALVLEAVGLDRDVIVADYLRSNDSVPQLRARISEMIQQRFDTELAPEVVTFTKARLSDGVLGVRAEYLAAARQTIDETYGSLGGYLRDAGISQATVNRMRGVLLG</sequence>
<gene>
    <name evidence="19" type="primary">ptpB</name>
    <name evidence="18" type="synonym">mptpB</name>
    <name evidence="26" type="ordered locus">Rv0153c</name>
</gene>
<protein>
    <recommendedName>
        <fullName evidence="22">Triple specificity protein phosphatase PtpB</fullName>
        <ecNumber evidence="6">3.1.3.-</ecNumber>
        <ecNumber evidence="6">3.1.3.16</ecNumber>
        <ecNumber evidence="1 4 6">3.1.3.48</ecNumber>
    </recommendedName>
    <alternativeName>
        <fullName evidence="18">MPtpB</fullName>
    </alternativeName>
    <alternativeName>
        <fullName evidence="20">Phosphoinositide phosphatase</fullName>
    </alternativeName>
    <alternativeName>
        <fullName evidence="22">Protein-serine/threonine phosphatase</fullName>
    </alternativeName>
    <alternativeName>
        <fullName evidence="22">Protein-tyrosine phosphatase B</fullName>
    </alternativeName>
    <alternativeName>
        <fullName evidence="21">TSP PTP</fullName>
    </alternativeName>
</protein>
<feature type="chain" id="PRO_0000450734" description="Triple specificity protein phosphatase PtpB">
    <location>
        <begin position="1"/>
        <end position="276"/>
    </location>
</feature>
<feature type="region of interest" description="UIM-like region" evidence="17">
    <location>
        <begin position="232"/>
        <end position="250"/>
    </location>
</feature>
<feature type="active site" description="Phosphocysteine intermediate" evidence="23 24">
    <location>
        <position position="160"/>
    </location>
</feature>
<feature type="site" description="Important for substrate specificity" evidence="24">
    <location>
        <position position="164"/>
    </location>
</feature>
<feature type="site" description="Important for activity" evidence="24">
    <location>
        <position position="165"/>
    </location>
</feature>
<feature type="mutagenesis site" description="No change in activity." evidence="6">
    <original>D</original>
    <variation>A</variation>
    <location>
        <position position="82"/>
    </location>
</feature>
<feature type="mutagenesis site" description="Shows less than 1% of wild-type activity. Does not affect macrophage apoptosis." evidence="1 6 10 17">
    <original>C</original>
    <variation>S</variation>
    <location>
        <position position="160"/>
    </location>
</feature>
<feature type="mutagenesis site" description="Loss of activity." evidence="11">
    <original>F</original>
    <variation>A</variation>
    <location>
        <position position="161"/>
    </location>
</feature>
<feature type="mutagenesis site" description="Shows new activity for di-phosphorylated substrates PI(3,4)P2, PI(4,5)P2 and PI(3,4,5)P3." evidence="11">
    <original>F</original>
    <variation>K</variation>
    <location>
        <position position="161"/>
    </location>
</feature>
<feature type="mutagenesis site" description="Shows less than 10% of the wild-type activity towards phosphotyrosine peptides, but remains unaltered towards pNPP and phosphoserine/threonine peptides." evidence="6 17">
    <original>K</original>
    <variation>A</variation>
    <location>
        <position position="164"/>
    </location>
</feature>
<feature type="mutagenesis site" description="Shows less than 0.1% of wild-type activity with peptides substrates." evidence="6">
    <original>D</original>
    <variation>N</variation>
    <location>
        <position position="165"/>
    </location>
</feature>
<feature type="mutagenesis site" description="Shows less than 1% of wild-type activity." evidence="6">
    <original>R</original>
    <variation>A</variation>
    <location>
        <position position="166"/>
    </location>
</feature>
<feature type="mutagenesis site" description="Abolished binding to host ubiquitin." evidence="17">
    <original>AAA</original>
    <variation>EEE</variation>
    <location>
        <begin position="240"/>
        <end position="242"/>
    </location>
</feature>
<name>PTPB_MYCTU</name>
<organism>
    <name type="scientific">Mycobacterium tuberculosis (strain ATCC 25618 / H37Rv)</name>
    <dbReference type="NCBI Taxonomy" id="83332"/>
    <lineage>
        <taxon>Bacteria</taxon>
        <taxon>Bacillati</taxon>
        <taxon>Actinomycetota</taxon>
        <taxon>Actinomycetes</taxon>
        <taxon>Mycobacteriales</taxon>
        <taxon>Mycobacteriaceae</taxon>
        <taxon>Mycobacterium</taxon>
        <taxon>Mycobacterium tuberculosis complex</taxon>
    </lineage>
</organism>
<keyword id="KW-0002">3D-structure</keyword>
<keyword id="KW-1032">Host cell membrane</keyword>
<keyword id="KW-1035">Host cytoplasm</keyword>
<keyword id="KW-1043">Host membrane</keyword>
<keyword id="KW-0378">Hydrolase</keyword>
<keyword id="KW-0472">Membrane</keyword>
<keyword id="KW-0904">Protein phosphatase</keyword>
<keyword id="KW-1185">Reference proteome</keyword>
<keyword id="KW-0964">Secreted</keyword>
<keyword id="KW-0843">Virulence</keyword>
<proteinExistence type="evidence at protein level"/>
<comment type="function">
    <text evidence="1 2 3 4 6 10 15 17">Essential virulence factor that promotes mycobacterial survival within host macrophages (PubMed:14617138, PubMed:16256440, PubMed:20167798, PubMed:29888212, PubMed:36227980). Acts as a phosphatase that possesses triple substrate specificity toward phosphotyrosine, phosphoserine/threonine and phosphoinositides (PubMed:10986245, PubMed:16271885, PubMed:17584180, PubMed:36227980). Supports mycobacteria survival during infection by modulating the normal host signaling pathways, attenuating the bactericidal immune responses and promoting the host cell survival (PubMed:20167798, PubMed:29888212). Inhibits host pyroptosis by disrupting the membrane localization of host gasdermin-D (GSDMD): acts by catalyzing dephosphorylation of phosphatidylinositol (4,5)-bisphosphate and phosphatidylinositol 4-phosphate, thereby inhibiting the membrane targeting of GSDMD and subsequent cytokine release and pyroptosis (PubMed:36227980). Inhibits host inflammatory responses and apoptosis through impeding the NF-kappa-B and MAPK signal pathways and TP53/p53 expression in the macrophage (PubMed:29888212). Blocks the IL6/IL-6 production by down-regulating ERK1/2, p38 and p65 activity (PubMed:20167798, PubMed:29888212). Prevents macrophage cell death by activating the Akt pathway and blocking caspase 3 activity (PubMed:20167798, PubMed:29888212). Reduces the expression of iNOS in activated macrophages and inhibits the generation of destroying reactive nitrogen intermediate NO (PubMed:29888212).</text>
</comment>
<comment type="catalytic activity">
    <reaction evidence="1 4 6">
        <text>O-phospho-L-tyrosyl-[protein] + H2O = L-tyrosyl-[protein] + phosphate</text>
        <dbReference type="Rhea" id="RHEA:10684"/>
        <dbReference type="Rhea" id="RHEA-COMP:10136"/>
        <dbReference type="Rhea" id="RHEA-COMP:20101"/>
        <dbReference type="ChEBI" id="CHEBI:15377"/>
        <dbReference type="ChEBI" id="CHEBI:43474"/>
        <dbReference type="ChEBI" id="CHEBI:46858"/>
        <dbReference type="ChEBI" id="CHEBI:61978"/>
        <dbReference type="EC" id="3.1.3.48"/>
    </reaction>
    <physiologicalReaction direction="left-to-right" evidence="1 4 6">
        <dbReference type="Rhea" id="RHEA:10685"/>
    </physiologicalReaction>
</comment>
<comment type="catalytic activity">
    <reaction evidence="6">
        <text>O-phospho-L-seryl-[protein] + H2O = L-seryl-[protein] + phosphate</text>
        <dbReference type="Rhea" id="RHEA:20629"/>
        <dbReference type="Rhea" id="RHEA-COMP:9863"/>
        <dbReference type="Rhea" id="RHEA-COMP:11604"/>
        <dbReference type="ChEBI" id="CHEBI:15377"/>
        <dbReference type="ChEBI" id="CHEBI:29999"/>
        <dbReference type="ChEBI" id="CHEBI:43474"/>
        <dbReference type="ChEBI" id="CHEBI:83421"/>
        <dbReference type="EC" id="3.1.3.16"/>
    </reaction>
    <physiologicalReaction direction="left-to-right" evidence="6">
        <dbReference type="Rhea" id="RHEA:20630"/>
    </physiologicalReaction>
</comment>
<comment type="catalytic activity">
    <reaction evidence="6">
        <text>O-phospho-L-threonyl-[protein] + H2O = L-threonyl-[protein] + phosphate</text>
        <dbReference type="Rhea" id="RHEA:47004"/>
        <dbReference type="Rhea" id="RHEA-COMP:11060"/>
        <dbReference type="Rhea" id="RHEA-COMP:11605"/>
        <dbReference type="ChEBI" id="CHEBI:15377"/>
        <dbReference type="ChEBI" id="CHEBI:30013"/>
        <dbReference type="ChEBI" id="CHEBI:43474"/>
        <dbReference type="ChEBI" id="CHEBI:61977"/>
        <dbReference type="EC" id="3.1.3.16"/>
    </reaction>
    <physiologicalReaction direction="left-to-right" evidence="6">
        <dbReference type="Rhea" id="RHEA:47005"/>
    </physiologicalReaction>
</comment>
<comment type="catalytic activity">
    <reaction evidence="6">
        <text>1,2-dioctanoyl-sn-glycero-3-phospho-(1-D-myo-inositol-3-phosphate) + H2O = 1,2-dioctanoyl-sn-glycero-3-phospho-(1D-myo-inositol) + phosphate</text>
        <dbReference type="Rhea" id="RHEA:42328"/>
        <dbReference type="ChEBI" id="CHEBI:15377"/>
        <dbReference type="ChEBI" id="CHEBI:43474"/>
        <dbReference type="ChEBI" id="CHEBI:65221"/>
        <dbReference type="ChEBI" id="CHEBI:78934"/>
    </reaction>
    <physiologicalReaction direction="left-to-right" evidence="6">
        <dbReference type="Rhea" id="RHEA:42329"/>
    </physiologicalReaction>
</comment>
<comment type="catalytic activity">
    <reaction evidence="6 17">
        <text>1,2-dioctanoyl-sn-glycero-3-phospho-(1-D-myo-inositol-4-phosphate) + H2O = 1,2-dioctanoyl-sn-glycero-3-phospho-(1D-myo-inositol) + phosphate</text>
        <dbReference type="Rhea" id="RHEA:45836"/>
        <dbReference type="ChEBI" id="CHEBI:15377"/>
        <dbReference type="ChEBI" id="CHEBI:43474"/>
        <dbReference type="ChEBI" id="CHEBI:65221"/>
        <dbReference type="ChEBI" id="CHEBI:85468"/>
    </reaction>
    <physiologicalReaction direction="left-to-right" evidence="6 17">
        <dbReference type="Rhea" id="RHEA:45837"/>
    </physiologicalReaction>
</comment>
<comment type="catalytic activity">
    <reaction evidence="6">
        <text>1,2-dioctanoyl-sn-glycero-3-phospho-(1D-myo-inositol-5-phosphate) + H2O = 1,2-dioctanoyl-sn-glycero-3-phospho-(1D-myo-inositol) + phosphate</text>
        <dbReference type="Rhea" id="RHEA:42308"/>
        <dbReference type="ChEBI" id="CHEBI:15377"/>
        <dbReference type="ChEBI" id="CHEBI:43474"/>
        <dbReference type="ChEBI" id="CHEBI:65221"/>
        <dbReference type="ChEBI" id="CHEBI:78911"/>
    </reaction>
    <physiologicalReaction direction="left-to-right" evidence="6">
        <dbReference type="Rhea" id="RHEA:42309"/>
    </physiologicalReaction>
</comment>
<comment type="activity regulation">
    <text evidence="1 9 10 12 16 17">Binding to host ubiquitin is required to activate the phosphatidylinositol phosphate phosphatase activity (PubMed:36227980). Phosphatase activity is inhibited by sodium orthovanadate, a specific inhibitor of tyrosine phosphatases, but not by okadaic acid, an inhibitor of serine/threonine phosphatases (PubMed:10986245). Inhibition of the enzyme reduces mycobacterial survival in infected macrophages (PubMed:19240079, PubMed:20167798, PubMed:21116447, PubMed:30153005). Inhibitors also enhance killing efficacy by first-line antibiotics (PubMed:30153005).</text>
</comment>
<comment type="biophysicochemical properties">
    <kinetics>
        <KM evidence="6">0.291 mM for P-tyr</KM>
        <KM evidence="6">0.44 mM for P-Ser</KM>
        <KM evidence="6">0.253 mM for P-Thr</KM>
        <KM evidence="6">0.217 mM for P-Tyr insulin</KM>
        <KM evidence="6">0.327 mM for P-Tyr EGFR</KM>
        <KM evidence="6">0.078 mM for P-Ser peptide</KM>
        <KM evidence="6">0.076 mM for P-Thr peptide</KM>
        <KM evidence="6">1.749 mM for 5'AMP</KM>
        <KM evidence="6">1.196 mM for 5'IMP</KM>
        <KM evidence="6">0.17 mM for pNPP</KM>
        <KM evidence="4">10 mM for pNPP</KM>
        <KM evidence="6">0.018 mM for PtdIns3P</KM>
        <KM evidence="6">0.074 mM for PtdIns4P</KM>
        <KM evidence="6">0.064 mM for PtdIns5P</KM>
        <text evidence="6">kcat is 60.0 sec(-1) with P-Tyr as substrate. kcat is 18.32 sec(-1) with P-Ser as substrate. kcat is 12.5 sec(-1) with P-Thr as substrate. kcat is 159.57 sec(-1) with P-Tyr insulin as substrate. kcat is 158.31 sec(-1) with P-Tyr EGFR as substrate. kcat is 18.08 sec(-1) with P-Ser peptide as substrate. kcat is 9.12 sec(-1) with P-Thr peptide as substrate. kcat is 60.97 sec(-1) with 5'AMP as substrate. kcat is 88.40 sec(-1) with 5'IMP as substrate. kcat is 134.70 sec(-1) with pNPP as substrate. kcat is 38.5 sec(-1) with PtdIns3P as substrate. kcat is 100.3 sec(-1) with PtdIns4P as substrate. kcat is 80.5 sec(-1) with PtdIns5P as substrate.</text>
    </kinetics>
    <phDependence>
        <text evidence="4">Optimum pH is near 5.5.</text>
    </phDependence>
</comment>
<comment type="subunit">
    <text evidence="17">Interacts (via UIM-like region) with host ubiquitin; activating the phosphatidylinositol phosphate phosphatase activity.</text>
</comment>
<comment type="subcellular location">
    <subcellularLocation>
        <location evidence="1">Secreted</location>
    </subcellularLocation>
    <subcellularLocation>
        <location evidence="17">Host cytoplasm</location>
    </subcellularLocation>
    <subcellularLocation>
        <location evidence="17">Host cell membrane</location>
    </subcellularLocation>
    <text evidence="25">Further investigation is required to determine whether PtpB is direct substrate for SecA2, the ESX/type VII secretion system, or an alternate mechanism.</text>
</comment>
<comment type="domain">
    <text evidence="17">The UIM-like region mediates binding to host ubiquitin.</text>
</comment>
<comment type="domain">
    <text evidence="4 5">Adopts a simplified PTP fold, which combines features of the conventional PTPs and dual-specificity phosphatases (PubMed:16271885). In the presence of OMTS inhibitor, the enzyme undergoes a large conformational change, allowing the inhibitor to bind deep in the active-site pocket (PubMed:17437721).</text>
</comment>
<comment type="disruption phenotype">
    <text evidence="2 3">Disruption of the gene impairs the ability of the mutant strain to survive in activated murine macrophages and in guinea pigs, but not in resting murine macrophages (PubMed:14617138, PubMed:16256440). Infection of guinea pigs with the mutant strain results in a 70-fold reduction in the bacillary load of spleens in infected animals (PubMed:14617138, PubMed:16256440). Disruption of the gene has no significant effect on the morphology and growth of the mutant in defined liquid culture medium (PubMed:14617138).</text>
</comment>
<comment type="biotechnology">
    <text evidence="5 7 8 9 10 12 13 14">The important role played by PtpB in virulence and the lack of PtpB human orthologs make it a highly promising target for the treatment of tuberculosis infections. Several classes of potent inhibitors have been developed and studied to date. Drug candidates include, among others, (oxalylamino-methylene)-thiophene sulfonamide (OMTS), isoxazole-based compounds, highly substituted indolo[2,3-a]quinolizidines, benzofuran salicylic acid derivatives, chalcone derivatives and several 2-oxo-1,2-dihydrobenzo[cd]indole-6-sulfonamide and piperazinyl-thiophenyl-ethyl-oxalamide derivatives.</text>
</comment>
<comment type="similarity">
    <text evidence="22">Belongs to the protein-tyrosine phosphatase family.</text>
</comment>
<accession>I6WXK4</accession>
<reference key="1">
    <citation type="journal article" date="1998" name="Nature">
        <title>Deciphering the biology of Mycobacterium tuberculosis from the complete genome sequence.</title>
        <authorList>
            <person name="Cole S.T."/>
            <person name="Brosch R."/>
            <person name="Parkhill J."/>
            <person name="Garnier T."/>
            <person name="Churcher C.M."/>
            <person name="Harris D.E."/>
            <person name="Gordon S.V."/>
            <person name="Eiglmeier K."/>
            <person name="Gas S."/>
            <person name="Barry C.E. III"/>
            <person name="Tekaia F."/>
            <person name="Badcock K."/>
            <person name="Basham D."/>
            <person name="Brown D."/>
            <person name="Chillingworth T."/>
            <person name="Connor R."/>
            <person name="Davies R.M."/>
            <person name="Devlin K."/>
            <person name="Feltwell T."/>
            <person name="Gentles S."/>
            <person name="Hamlin N."/>
            <person name="Holroyd S."/>
            <person name="Hornsby T."/>
            <person name="Jagels K."/>
            <person name="Krogh A."/>
            <person name="McLean J."/>
            <person name="Moule S."/>
            <person name="Murphy L.D."/>
            <person name="Oliver S."/>
            <person name="Osborne J."/>
            <person name="Quail M.A."/>
            <person name="Rajandream M.A."/>
            <person name="Rogers J."/>
            <person name="Rutter S."/>
            <person name="Seeger K."/>
            <person name="Skelton S."/>
            <person name="Squares S."/>
            <person name="Squares R."/>
            <person name="Sulston J.E."/>
            <person name="Taylor K."/>
            <person name="Whitehead S."/>
            <person name="Barrell B.G."/>
        </authorList>
    </citation>
    <scope>NUCLEOTIDE SEQUENCE [LARGE SCALE GENOMIC DNA]</scope>
    <source>
        <strain>ATCC 25618 / H37Rv</strain>
    </source>
</reference>
<reference key="2">
    <citation type="journal article" date="2000" name="J. Bacteriol.">
        <title>Cloning and characterization of secretory tyrosine phosphatases of Mycobacterium tuberculosis.</title>
        <authorList>
            <person name="Koul A."/>
            <person name="Choidas A."/>
            <person name="Treder M."/>
            <person name="Tyagi A.K."/>
            <person name="Drlica K."/>
            <person name="Singh Y."/>
            <person name="Ullrich A."/>
        </authorList>
    </citation>
    <scope>FUNCTION</scope>
    <scope>CATALYTIC ACTIVITY</scope>
    <scope>ACTIVITY REGULATION</scope>
    <scope>SUBCELLULAR LOCATION</scope>
    <scope>MUTAGENESIS OF CYS-160</scope>
    <source>
        <strain>H37Rv</strain>
    </source>
</reference>
<reference key="3">
    <citation type="journal article" date="2003" name="Mol. Microbiol.">
        <title>Disruption of mptpB impairs the ability of Mycobacterium tuberculosis to survive in guinea pigs.</title>
        <authorList>
            <person name="Singh R."/>
            <person name="Rao V."/>
            <person name="Shakila H."/>
            <person name="Gupta R."/>
            <person name="Khera A."/>
            <person name="Dhar N."/>
            <person name="Singh A."/>
            <person name="Koul A."/>
            <person name="Singh Y."/>
            <person name="Naseema M."/>
            <person name="Narayanan P.R."/>
            <person name="Paramasivan C.N."/>
            <person name="Ramanathan V.D."/>
            <person name="Tyagi A.K."/>
        </authorList>
    </citation>
    <scope>FUNCTION IN VIRULENCE</scope>
    <scope>DISRUPTION PHENOTYPE</scope>
</reference>
<reference key="4">
    <citation type="journal article" date="2005" name="Tuberculosis">
        <title>Deciphering the genes involved in pathogenesis of Mycobacterium tuberculosis.</title>
        <authorList>
            <person name="Singh R."/>
            <person name="Singh A."/>
            <person name="Tyagi A.K."/>
        </authorList>
    </citation>
    <scope>FUNCTION IN VIRULENCE</scope>
    <scope>DISRUPTION PHENOTYPE</scope>
</reference>
<reference key="5">
    <citation type="journal article" date="2007" name="Biochem. J.">
        <title>MptpB, a virulence factor from Mycobacterium tuberculosis, exhibits triple-specificity phosphatase activity.</title>
        <authorList>
            <person name="Beresford N."/>
            <person name="Patel S."/>
            <person name="Armstrong J."/>
            <person name="Szoeor B."/>
            <person name="Fordham-Skelton A.P."/>
            <person name="Tabernero L."/>
        </authorList>
    </citation>
    <scope>FUNCTION</scope>
    <scope>CATALYTIC ACTIVITY</scope>
    <scope>BIOPHYSICOCHEMICAL PROPERTIES</scope>
    <scope>ACTIVE SITE</scope>
    <scope>MUTAGENESIS OF ASP-82; CYS-160; LYS-164; ASP-165 AND ARG-166</scope>
</reference>
<reference key="6">
    <citation type="journal article" date="2007" name="J. Am. Chem. Soc.">
        <title>Fragment-based substrate activity screening method for the identification of potent inhibitors of the Mycobacterium tuberculosis phosphatase PtpB.</title>
        <authorList>
            <person name="Soellner M.B."/>
            <person name="Rawls K.A."/>
            <person name="Grundner C."/>
            <person name="Alber T."/>
            <person name="Ellman J.A."/>
        </authorList>
    </citation>
    <scope>BIOTECHNOLOGY</scope>
</reference>
<reference key="7">
    <citation type="journal article" date="2007" name="Chem. Asian J.">
        <title>Identification of inhibitors for mycobacterial protein tyrosine phosphatase B (MptpB) by biology-oriented synthesis (BIOS).</title>
        <authorList>
            <person name="Correa I.R. Jr."/>
            <person name="Noeren-Mueller A."/>
            <person name="Ambrosi H.D."/>
            <person name="Jakupovic S."/>
            <person name="Saxena K."/>
            <person name="Schwalbe H."/>
            <person name="Kaiser M."/>
            <person name="Waldmann H."/>
        </authorList>
    </citation>
    <scope>BIOTECHNOLOGY</scope>
</reference>
<reference key="8">
    <citation type="journal article" date="2009" name="J. Antimicrob. Chemother.">
        <title>Inhibition of MptpB phosphatase from Mycobacterium tuberculosis impairs mycobacterial survival in macrophages.</title>
        <authorList>
            <person name="Beresford N.J."/>
            <person name="Mulhearn D."/>
            <person name="Szczepankiewicz B."/>
            <person name="Liu G."/>
            <person name="Johnson M.E."/>
            <person name="Fordham-Skelton A."/>
            <person name="Abad-Zapatero C."/>
            <person name="Cavet J.S."/>
            <person name="Tabernero L."/>
        </authorList>
    </citation>
    <scope>ACTIVITY REGULATION</scope>
    <scope>BIOTECHNOLOGY</scope>
    <source>
        <strain>H37Rv</strain>
    </source>
</reference>
<reference key="9">
    <citation type="journal article" date="2010" name="Proc. Natl. Acad. Sci. U.S.A.">
        <title>Targeting mycobacterium protein tyrosine phosphatase B for antituberculosis agents.</title>
        <authorList>
            <person name="Zhou B."/>
            <person name="He Y."/>
            <person name="Zhang X."/>
            <person name="Xu J."/>
            <person name="Luo Y."/>
            <person name="Wang Y."/>
            <person name="Franzblau S.G."/>
            <person name="Yang Z."/>
            <person name="Chan R.J."/>
            <person name="Liu Y."/>
            <person name="Zheng J."/>
            <person name="Zhang Z.Y."/>
        </authorList>
    </citation>
    <scope>FUNCTION IN VIRULENCE</scope>
    <scope>ACTIVITY REGULATION</scope>
    <scope>BIOTECHNOLOGY</scope>
    <scope>MUTAGENESIS OF CYS-160</scope>
</reference>
<reference key="10">
    <citation type="journal article" date="2010" name="BMC Genomics">
        <title>A new family of phosphoinositide phosphatases in microorganisms: identification and biochemical analysis.</title>
        <authorList>
            <person name="Beresford N.J."/>
            <person name="Saville C."/>
            <person name="Bennett H.J."/>
            <person name="Roberts I.S."/>
            <person name="Tabernero L."/>
        </authorList>
    </citation>
    <scope>MUTAGENESIS OF PHE-161</scope>
    <scope>FAMILY</scope>
</reference>
<reference key="11">
    <citation type="journal article" date="2010" name="ACS Med. Chem. Lett.">
        <title>Identification and characterization of novel inhibitors of mPTPB, an essential virulent phosphatase from Mycobacterium tuberculosis.</title>
        <authorList>
            <person name="Chen L."/>
            <person name="Zhou B."/>
            <person name="Zhang S."/>
            <person name="Wu L."/>
            <person name="Wang Y."/>
            <person name="Franzblau S.G."/>
            <person name="Zhang Z.Y."/>
        </authorList>
    </citation>
    <scope>ACTIVITY REGULATION</scope>
    <scope>BIOTECHNOLOGY</scope>
</reference>
<reference key="12">
    <citation type="journal article" date="2011" name="Mol. Cell. Proteomics">
        <title>Proteogenomic analysis of Mycobacterium tuberculosis by high resolution mass spectrometry.</title>
        <authorList>
            <person name="Kelkar D.S."/>
            <person name="Kumar D."/>
            <person name="Kumar P."/>
            <person name="Balakrishnan L."/>
            <person name="Muthusamy B."/>
            <person name="Yadav A.K."/>
            <person name="Shrivastava P."/>
            <person name="Marimuthu A."/>
            <person name="Anand S."/>
            <person name="Sundaram H."/>
            <person name="Kingsbury R."/>
            <person name="Harsha H.C."/>
            <person name="Nair B."/>
            <person name="Prasad T.S."/>
            <person name="Chauhan D.S."/>
            <person name="Katoch K."/>
            <person name="Katoch V.M."/>
            <person name="Kumar P."/>
            <person name="Chaerkady R."/>
            <person name="Ramachandran S."/>
            <person name="Dash D."/>
            <person name="Pandey A."/>
        </authorList>
    </citation>
    <scope>IDENTIFICATION BY MASS SPECTROMETRY [LARGE SCALE ANALYSIS]</scope>
</reference>
<reference key="13">
    <citation type="journal article" date="2012" name="J. Med. Chem.">
        <title>Synthesis, biological evaluation, and molecular modeling of chalcone derivatives as potent inhibitors of Mycobacterium tuberculosis protein tyrosine phosphatases (PtpA and PtpB).</title>
        <authorList>
            <person name="Chiaradia L.D."/>
            <person name="Martins P.G."/>
            <person name="Cordeiro M.N."/>
            <person name="Guido R.V."/>
            <person name="Ecco G."/>
            <person name="Andricopulo A.D."/>
            <person name="Yunes R.A."/>
            <person name="Vernal J."/>
            <person name="Nunes R.J."/>
            <person name="Terenzi H."/>
        </authorList>
    </citation>
    <scope>BIOTECHNOLOGY</scope>
</reference>
<reference key="14">
    <citation type="journal article" date="2014" name="BMC Genomics">
        <title>Structural insights into mode of actions of novel natural Mycobacterium protein tyrosine phosphatase B inhibitors.</title>
        <authorList>
            <person name="Dhanjal J.K."/>
            <person name="Grover S."/>
            <person name="Sharma S."/>
            <person name="Singh A."/>
            <person name="Grover A."/>
        </authorList>
    </citation>
    <scope>BIOTECHNOLOGY</scope>
</reference>
<reference key="15">
    <citation type="journal article" date="2018" name="Front. Cell. Infect. Microbiol.">
        <title>MptpB promotes mycobacteria survival by inhibiting the expression of inflammatory mediators and cell apoptosis in macrophages.</title>
        <authorList>
            <person name="Fan L."/>
            <person name="Wu X."/>
            <person name="Jin C."/>
            <person name="Li F."/>
            <person name="Xiong S."/>
            <person name="Dong Y."/>
        </authorList>
    </citation>
    <scope>FUNCTION IN VIRULENCE</scope>
    <source>
        <strain>H37Rv</strain>
    </source>
</reference>
<reference key="16">
    <citation type="journal article" date="2018" name="J. Med. Chem.">
        <title>Structure-based design of MptpB inhibitors that reduce multidrug-resistant Mycobacterium tuberculosis survival and infection burden in vivo.</title>
        <authorList>
            <person name="Vickers C.F."/>
            <person name="Silva A.P.G."/>
            <person name="Chakraborty A."/>
            <person name="Fernandez P."/>
            <person name="Kurepina N."/>
            <person name="Saville C."/>
            <person name="Naranjo Y."/>
            <person name="Pons M."/>
            <person name="Schnettger L.S."/>
            <person name="Gutierrez M.G."/>
            <person name="Park S."/>
            <person name="Kreiswith B.N."/>
            <person name="Perlin D.S."/>
            <person name="Thomas E.J."/>
            <person name="Cavet J.S."/>
            <person name="Tabernero L."/>
        </authorList>
    </citation>
    <scope>ACTIVITY REGULATION</scope>
</reference>
<reference key="17">
    <citation type="journal article" date="2022" name="Science">
        <title>A bacterial phospholipid phosphatase inhibits host pyroptosis by hijacking ubiquitin.</title>
        <authorList>
            <person name="Chai Q."/>
            <person name="Yu S."/>
            <person name="Zhong Y."/>
            <person name="Lu Z."/>
            <person name="Qiu C."/>
            <person name="Yu Y."/>
            <person name="Zhang X."/>
            <person name="Zhang Y."/>
            <person name="Lei Z."/>
            <person name="Qiang L."/>
            <person name="Li B.X."/>
            <person name="Pang Y."/>
            <person name="Qiu X.B."/>
            <person name="Wang J."/>
            <person name="Liu C.H."/>
        </authorList>
    </citation>
    <scope>FUNCTION</scope>
    <scope>CATALYTIC ACTIVITY</scope>
    <scope>ACTIVITY REGULATION</scope>
    <scope>SUBCELLULAR LOCATION</scope>
    <scope>INTERACTION WITH HOST UBIQUITIN</scope>
    <scope>DOMAIN</scope>
    <scope>MUTAGENESIS OF CYS-160; LYS-164 AND 240-ALA--ALA-242</scope>
</reference>
<reference key="18">
    <citation type="journal article" date="2013" name="Trends Microbiol.">
        <title>Mycobacterium tuberculosis-secreted phosphatases: from pathogenesis to targets for TB drug development.</title>
        <authorList>
            <person name="Wong D."/>
            <person name="Chao J.D."/>
            <person name="Av-Gay Y."/>
        </authorList>
    </citation>
    <scope>REVIEW</scope>
</reference>
<reference evidence="27" key="19">
    <citation type="journal article" date="2005" name="Structure">
        <title>Mycobacterium tuberculosis protein tyrosine phosphatase PtpB structure reveals a diverged fold and a buried active site.</title>
        <authorList>
            <person name="Grundner C."/>
            <person name="Ng H.L."/>
            <person name="Alber T."/>
        </authorList>
    </citation>
    <scope>X-RAY CRYSTALLOGRAPHY (1.71 ANGSTROMS) IN COMPLEX WITH PHOSPHATE</scope>
    <scope>FUNCTION</scope>
    <scope>CATALYTIC ACTIVITY</scope>
    <scope>BIOPHYSICOCHEMICAL PROPERTIES</scope>
    <scope>DOMAIN</scope>
    <scope>ACTIVE SITE</scope>
</reference>
<reference evidence="28" key="20">
    <citation type="journal article" date="2007" name="Structure">
        <title>Structural basis for selective inhibition of Mycobacterium tuberculosis protein tyrosine phosphatase PtpB.</title>
        <authorList>
            <person name="Grundner C."/>
            <person name="Perrin D."/>
            <person name="Hooft van Huijsduijnen R."/>
            <person name="Swinnen D."/>
            <person name="Gonzalez J."/>
            <person name="Gee C.L."/>
            <person name="Wells T.N."/>
            <person name="Alber T."/>
        </authorList>
    </citation>
    <scope>X-RAY CRYSTALLOGRAPHY (2.00 ANGSTROMS) IN COMPLEX WITH INHIBITOR OMTS</scope>
    <scope>ACTIVITY REGULATION</scope>
</reference>
<evidence type="ECO:0000269" key="1">
    <source>
    </source>
</evidence>
<evidence type="ECO:0000269" key="2">
    <source>
    </source>
</evidence>
<evidence type="ECO:0000269" key="3">
    <source>
    </source>
</evidence>
<evidence type="ECO:0000269" key="4">
    <source>
    </source>
</evidence>
<evidence type="ECO:0000269" key="5">
    <source>
    </source>
</evidence>
<evidence type="ECO:0000269" key="6">
    <source>
    </source>
</evidence>
<evidence type="ECO:0000269" key="7">
    <source>
    </source>
</evidence>
<evidence type="ECO:0000269" key="8">
    <source>
    </source>
</evidence>
<evidence type="ECO:0000269" key="9">
    <source>
    </source>
</evidence>
<evidence type="ECO:0000269" key="10">
    <source>
    </source>
</evidence>
<evidence type="ECO:0000269" key="11">
    <source>
    </source>
</evidence>
<evidence type="ECO:0000269" key="12">
    <source>
    </source>
</evidence>
<evidence type="ECO:0000269" key="13">
    <source>
    </source>
</evidence>
<evidence type="ECO:0000269" key="14">
    <source>
    </source>
</evidence>
<evidence type="ECO:0000269" key="15">
    <source>
    </source>
</evidence>
<evidence type="ECO:0000269" key="16">
    <source>
    </source>
</evidence>
<evidence type="ECO:0000269" key="17">
    <source>
    </source>
</evidence>
<evidence type="ECO:0000303" key="18">
    <source>
    </source>
</evidence>
<evidence type="ECO:0000303" key="19">
    <source>
    </source>
</evidence>
<evidence type="ECO:0000303" key="20">
    <source>
    </source>
</evidence>
<evidence type="ECO:0000303" key="21">
    <source>
    </source>
</evidence>
<evidence type="ECO:0000305" key="22"/>
<evidence type="ECO:0000305" key="23">
    <source>
    </source>
</evidence>
<evidence type="ECO:0000305" key="24">
    <source>
    </source>
</evidence>
<evidence type="ECO:0000305" key="25">
    <source>
    </source>
</evidence>
<evidence type="ECO:0000312" key="26">
    <source>
        <dbReference type="EMBL" id="CCP42878.1"/>
    </source>
</evidence>
<evidence type="ECO:0007744" key="27">
    <source>
        <dbReference type="PDB" id="1YWF"/>
    </source>
</evidence>
<evidence type="ECO:0007744" key="28">
    <source>
        <dbReference type="PDB" id="2OZ5"/>
    </source>
</evidence>
<dbReference type="EC" id="3.1.3.-" evidence="6"/>
<dbReference type="EC" id="3.1.3.16" evidence="6"/>
<dbReference type="EC" id="3.1.3.48" evidence="1 4 6"/>
<dbReference type="EMBL" id="AL123456">
    <property type="protein sequence ID" value="CCP42878.1"/>
    <property type="molecule type" value="Genomic_DNA"/>
</dbReference>
<dbReference type="RefSeq" id="NP_214667.1">
    <property type="nucleotide sequence ID" value="NC_000962.3"/>
</dbReference>
<dbReference type="PDB" id="1YWF">
    <property type="method" value="X-ray"/>
    <property type="resolution" value="1.71 A"/>
    <property type="chains" value="A=1-276"/>
</dbReference>
<dbReference type="PDB" id="2OZ5">
    <property type="method" value="X-ray"/>
    <property type="resolution" value="2.00 A"/>
    <property type="chains" value="A/B=1-276"/>
</dbReference>
<dbReference type="PDBsum" id="1YWF"/>
<dbReference type="PDBsum" id="2OZ5"/>
<dbReference type="SMR" id="I6WXK4"/>
<dbReference type="STRING" id="83332.Rv0153c"/>
<dbReference type="BindingDB" id="I6WXK4"/>
<dbReference type="SwissLipids" id="SLP:000001160"/>
<dbReference type="PaxDb" id="83332-Rv0153c"/>
<dbReference type="DNASU" id="886842"/>
<dbReference type="GeneID" id="886842"/>
<dbReference type="KEGG" id="mtu:Rv0153c"/>
<dbReference type="KEGG" id="mtv:RVBD_0153c"/>
<dbReference type="PATRIC" id="fig|83332.111.peg.178"/>
<dbReference type="TubercuList" id="Rv0153c"/>
<dbReference type="eggNOG" id="COG2365">
    <property type="taxonomic scope" value="Bacteria"/>
</dbReference>
<dbReference type="InParanoid" id="I6WXK4"/>
<dbReference type="OrthoDB" id="1188001at2"/>
<dbReference type="PhylomeDB" id="I6WXK4"/>
<dbReference type="Proteomes" id="UP000001584">
    <property type="component" value="Chromosome"/>
</dbReference>
<dbReference type="GO" id="GO:0005576">
    <property type="term" value="C:extracellular region"/>
    <property type="evidence" value="ECO:0007669"/>
    <property type="project" value="UniProtKB-SubCell"/>
</dbReference>
<dbReference type="GO" id="GO:0030430">
    <property type="term" value="C:host cell cytoplasm"/>
    <property type="evidence" value="ECO:0000314"/>
    <property type="project" value="UniProtKB"/>
</dbReference>
<dbReference type="GO" id="GO:0020002">
    <property type="term" value="C:host cell plasma membrane"/>
    <property type="evidence" value="ECO:0000314"/>
    <property type="project" value="UniProtKB"/>
</dbReference>
<dbReference type="GO" id="GO:0016020">
    <property type="term" value="C:membrane"/>
    <property type="evidence" value="ECO:0007669"/>
    <property type="project" value="UniProtKB-KW"/>
</dbReference>
<dbReference type="GO" id="GO:0016791">
    <property type="term" value="F:phosphatase activity"/>
    <property type="evidence" value="ECO:0000318"/>
    <property type="project" value="GO_Central"/>
</dbReference>
<dbReference type="GO" id="GO:0106019">
    <property type="term" value="F:phosphatidylinositol-4,5-bisphosphate phosphatase activity"/>
    <property type="evidence" value="ECO:0000314"/>
    <property type="project" value="UniProtKB"/>
</dbReference>
<dbReference type="GO" id="GO:0043812">
    <property type="term" value="F:phosphatidylinositol-4-phosphate phosphatase activity"/>
    <property type="evidence" value="ECO:0000314"/>
    <property type="project" value="UniProtKB"/>
</dbReference>
<dbReference type="GO" id="GO:0004722">
    <property type="term" value="F:protein serine/threonine phosphatase activity"/>
    <property type="evidence" value="ECO:0007669"/>
    <property type="project" value="UniProtKB-EC"/>
</dbReference>
<dbReference type="GO" id="GO:0004725">
    <property type="term" value="F:protein tyrosine phosphatase activity"/>
    <property type="evidence" value="ECO:0007669"/>
    <property type="project" value="UniProtKB-EC"/>
</dbReference>
<dbReference type="GO" id="GO:0043130">
    <property type="term" value="F:ubiquitin binding"/>
    <property type="evidence" value="ECO:0000314"/>
    <property type="project" value="UniProtKB"/>
</dbReference>
<dbReference type="GO" id="GO:0141081">
    <property type="term" value="P:symbiont-mediated suppression of host inflammasome-mediated signal transduction"/>
    <property type="evidence" value="ECO:0000269"/>
    <property type="project" value="SigSci"/>
</dbReference>
<dbReference type="GO" id="GO:0052036">
    <property type="term" value="P:symbiont-mediated suppression of host inflammatory response"/>
    <property type="evidence" value="ECO:0000314"/>
    <property type="project" value="UniProtKB"/>
</dbReference>
<dbReference type="GO" id="GO:0052041">
    <property type="term" value="P:symbiont-mediated suppression of host programmed cell death"/>
    <property type="evidence" value="ECO:0000314"/>
    <property type="project" value="UniProtKB"/>
</dbReference>
<dbReference type="CDD" id="cd14529">
    <property type="entry name" value="TpbA-like"/>
    <property type="match status" value="1"/>
</dbReference>
<dbReference type="Gene3D" id="3.90.190.10">
    <property type="entry name" value="Protein tyrosine phosphatase superfamily"/>
    <property type="match status" value="1"/>
</dbReference>
<dbReference type="InterPro" id="IPR029021">
    <property type="entry name" value="Prot-tyrosine_phosphatase-like"/>
</dbReference>
<dbReference type="InterPro" id="IPR026893">
    <property type="entry name" value="Tyr/Ser_Pase_IphP-type"/>
</dbReference>
<dbReference type="InterPro" id="IPR000387">
    <property type="entry name" value="Tyr_Pase_dom"/>
</dbReference>
<dbReference type="PANTHER" id="PTHR31126:SF1">
    <property type="entry name" value="TYROSINE SPECIFIC PROTEIN PHOSPHATASES DOMAIN-CONTAINING PROTEIN"/>
    <property type="match status" value="1"/>
</dbReference>
<dbReference type="PANTHER" id="PTHR31126">
    <property type="entry name" value="TYROSINE-PROTEIN PHOSPHATASE"/>
    <property type="match status" value="1"/>
</dbReference>
<dbReference type="Pfam" id="PF13350">
    <property type="entry name" value="Y_phosphatase3"/>
    <property type="match status" value="1"/>
</dbReference>
<dbReference type="SUPFAM" id="SSF52799">
    <property type="entry name" value="(Phosphotyrosine protein) phosphatases II"/>
    <property type="match status" value="1"/>
</dbReference>
<dbReference type="PROSITE" id="PS50056">
    <property type="entry name" value="TYR_PHOSPHATASE_2"/>
    <property type="match status" value="1"/>
</dbReference>